<comment type="function">
    <text evidence="1">Component of the A-type ATP synthase that produces ATP from ADP in the presence of a proton gradient across the membrane. The A chain is the catalytic subunit.</text>
</comment>
<comment type="catalytic activity">
    <reaction evidence="1">
        <text>ATP + H2O + 4 H(+)(in) = ADP + phosphate + 5 H(+)(out)</text>
        <dbReference type="Rhea" id="RHEA:57720"/>
        <dbReference type="ChEBI" id="CHEBI:15377"/>
        <dbReference type="ChEBI" id="CHEBI:15378"/>
        <dbReference type="ChEBI" id="CHEBI:30616"/>
        <dbReference type="ChEBI" id="CHEBI:43474"/>
        <dbReference type="ChEBI" id="CHEBI:456216"/>
        <dbReference type="EC" id="7.1.2.2"/>
    </reaction>
</comment>
<comment type="subunit">
    <text evidence="1">Has multiple subunits with at least A(3), B(3), C, D, E, F, H, I and proteolipid K(x).</text>
</comment>
<comment type="subcellular location">
    <subcellularLocation>
        <location evidence="1">Cell membrane</location>
        <topology evidence="1">Peripheral membrane protein</topology>
    </subcellularLocation>
</comment>
<comment type="similarity">
    <text evidence="1">Belongs to the ATPase alpha/beta chains family.</text>
</comment>
<keyword id="KW-0066">ATP synthesis</keyword>
<keyword id="KW-0067">ATP-binding</keyword>
<keyword id="KW-1003">Cell membrane</keyword>
<keyword id="KW-0375">Hydrogen ion transport</keyword>
<keyword id="KW-0406">Ion transport</keyword>
<keyword id="KW-0472">Membrane</keyword>
<keyword id="KW-0547">Nucleotide-binding</keyword>
<keyword id="KW-1185">Reference proteome</keyword>
<keyword id="KW-1278">Translocase</keyword>
<keyword id="KW-0813">Transport</keyword>
<protein>
    <recommendedName>
        <fullName evidence="1">A-type ATP synthase subunit A</fullName>
        <ecNumber evidence="1">7.1.2.2</ecNumber>
    </recommendedName>
</protein>
<dbReference type="EC" id="7.1.2.2" evidence="1"/>
<dbReference type="EMBL" id="AM114193">
    <property type="protein sequence ID" value="CAJ37180.1"/>
    <property type="molecule type" value="Genomic_DNA"/>
</dbReference>
<dbReference type="RefSeq" id="WP_012035394.1">
    <property type="nucleotide sequence ID" value="NC_009464.1"/>
</dbReference>
<dbReference type="SMR" id="Q0W363"/>
<dbReference type="STRING" id="351160.RCIX2030"/>
<dbReference type="GeneID" id="5143316"/>
<dbReference type="KEGG" id="rci:RCIX2030"/>
<dbReference type="PATRIC" id="fig|351160.9.peg.1101"/>
<dbReference type="eggNOG" id="arCOG00868">
    <property type="taxonomic scope" value="Archaea"/>
</dbReference>
<dbReference type="OrthoDB" id="115235at2157"/>
<dbReference type="Proteomes" id="UP000000663">
    <property type="component" value="Chromosome"/>
</dbReference>
<dbReference type="GO" id="GO:0005886">
    <property type="term" value="C:plasma membrane"/>
    <property type="evidence" value="ECO:0007669"/>
    <property type="project" value="UniProtKB-SubCell"/>
</dbReference>
<dbReference type="GO" id="GO:0033178">
    <property type="term" value="C:proton-transporting two-sector ATPase complex, catalytic domain"/>
    <property type="evidence" value="ECO:0007669"/>
    <property type="project" value="InterPro"/>
</dbReference>
<dbReference type="GO" id="GO:0005524">
    <property type="term" value="F:ATP binding"/>
    <property type="evidence" value="ECO:0007669"/>
    <property type="project" value="UniProtKB-UniRule"/>
</dbReference>
<dbReference type="GO" id="GO:0046933">
    <property type="term" value="F:proton-transporting ATP synthase activity, rotational mechanism"/>
    <property type="evidence" value="ECO:0007669"/>
    <property type="project" value="UniProtKB-UniRule"/>
</dbReference>
<dbReference type="GO" id="GO:0046961">
    <property type="term" value="F:proton-transporting ATPase activity, rotational mechanism"/>
    <property type="evidence" value="ECO:0007669"/>
    <property type="project" value="InterPro"/>
</dbReference>
<dbReference type="GO" id="GO:0042777">
    <property type="term" value="P:proton motive force-driven plasma membrane ATP synthesis"/>
    <property type="evidence" value="ECO:0007669"/>
    <property type="project" value="UniProtKB-UniRule"/>
</dbReference>
<dbReference type="CDD" id="cd18111">
    <property type="entry name" value="ATP-synt_V_A-type_alpha_C"/>
    <property type="match status" value="1"/>
</dbReference>
<dbReference type="CDD" id="cd18119">
    <property type="entry name" value="ATP-synt_V_A-type_alpha_N"/>
    <property type="match status" value="1"/>
</dbReference>
<dbReference type="CDD" id="cd01134">
    <property type="entry name" value="V_A-ATPase_A"/>
    <property type="match status" value="1"/>
</dbReference>
<dbReference type="FunFam" id="3.40.50.300:FF:000675">
    <property type="entry name" value="V-type ATP synthase alpha chain"/>
    <property type="match status" value="1"/>
</dbReference>
<dbReference type="FunFam" id="1.10.1140.10:FF:000002">
    <property type="entry name" value="V-type proton ATPase catalytic subunit A"/>
    <property type="match status" value="1"/>
</dbReference>
<dbReference type="FunFam" id="2.40.30.20:FF:000002">
    <property type="entry name" value="V-type proton ATPase catalytic subunit A"/>
    <property type="match status" value="1"/>
</dbReference>
<dbReference type="Gene3D" id="2.40.30.20">
    <property type="match status" value="1"/>
</dbReference>
<dbReference type="Gene3D" id="2.40.50.100">
    <property type="match status" value="1"/>
</dbReference>
<dbReference type="Gene3D" id="1.10.1140.10">
    <property type="entry name" value="Bovine Mitochondrial F1-atpase, Atp Synthase Beta Chain, Chain D, domain 3"/>
    <property type="match status" value="1"/>
</dbReference>
<dbReference type="Gene3D" id="3.40.50.300">
    <property type="entry name" value="P-loop containing nucleotide triphosphate hydrolases"/>
    <property type="match status" value="1"/>
</dbReference>
<dbReference type="HAMAP" id="MF_00309">
    <property type="entry name" value="ATP_synth_A_arch"/>
    <property type="match status" value="1"/>
</dbReference>
<dbReference type="InterPro" id="IPR055190">
    <property type="entry name" value="ATP-synt_VA_C"/>
</dbReference>
<dbReference type="InterPro" id="IPR031686">
    <property type="entry name" value="ATP-synth_a_Xtn"/>
</dbReference>
<dbReference type="InterPro" id="IPR023366">
    <property type="entry name" value="ATP_synth_asu-like_sf"/>
</dbReference>
<dbReference type="InterPro" id="IPR005726">
    <property type="entry name" value="ATP_synth_asu_arc"/>
</dbReference>
<dbReference type="InterPro" id="IPR020003">
    <property type="entry name" value="ATPase_a/bsu_AS"/>
</dbReference>
<dbReference type="InterPro" id="IPR004100">
    <property type="entry name" value="ATPase_F1/V1/A1_a/bsu_N"/>
</dbReference>
<dbReference type="InterPro" id="IPR036121">
    <property type="entry name" value="ATPase_F1/V1/A1_a/bsu_N_sf"/>
</dbReference>
<dbReference type="InterPro" id="IPR000194">
    <property type="entry name" value="ATPase_F1/V1/A1_a/bsu_nucl-bd"/>
</dbReference>
<dbReference type="InterPro" id="IPR024034">
    <property type="entry name" value="ATPase_F1/V1_b/a_C"/>
</dbReference>
<dbReference type="InterPro" id="IPR027417">
    <property type="entry name" value="P-loop_NTPase"/>
</dbReference>
<dbReference type="InterPro" id="IPR022878">
    <property type="entry name" value="V-ATPase_asu"/>
</dbReference>
<dbReference type="NCBIfam" id="TIGR01043">
    <property type="entry name" value="ATP_syn_A_arch"/>
    <property type="match status" value="1"/>
</dbReference>
<dbReference type="NCBIfam" id="NF003220">
    <property type="entry name" value="PRK04192.1"/>
    <property type="match status" value="1"/>
</dbReference>
<dbReference type="PANTHER" id="PTHR43607:SF1">
    <property type="entry name" value="H(+)-TRANSPORTING TWO-SECTOR ATPASE"/>
    <property type="match status" value="1"/>
</dbReference>
<dbReference type="PANTHER" id="PTHR43607">
    <property type="entry name" value="V-TYPE PROTON ATPASE CATALYTIC SUBUNIT A"/>
    <property type="match status" value="1"/>
</dbReference>
<dbReference type="Pfam" id="PF00006">
    <property type="entry name" value="ATP-synt_ab"/>
    <property type="match status" value="1"/>
</dbReference>
<dbReference type="Pfam" id="PF02874">
    <property type="entry name" value="ATP-synt_ab_N"/>
    <property type="match status" value="1"/>
</dbReference>
<dbReference type="Pfam" id="PF16886">
    <property type="entry name" value="ATP-synt_ab_Xtn"/>
    <property type="match status" value="1"/>
</dbReference>
<dbReference type="Pfam" id="PF22919">
    <property type="entry name" value="ATP-synt_VA_C"/>
    <property type="match status" value="1"/>
</dbReference>
<dbReference type="SUPFAM" id="SSF47917">
    <property type="entry name" value="C-terminal domain of alpha and beta subunits of F1 ATP synthase"/>
    <property type="match status" value="1"/>
</dbReference>
<dbReference type="SUPFAM" id="SSF50615">
    <property type="entry name" value="N-terminal domain of alpha and beta subunits of F1 ATP synthase"/>
    <property type="match status" value="1"/>
</dbReference>
<dbReference type="SUPFAM" id="SSF52540">
    <property type="entry name" value="P-loop containing nucleoside triphosphate hydrolases"/>
    <property type="match status" value="1"/>
</dbReference>
<dbReference type="PROSITE" id="PS00152">
    <property type="entry name" value="ATPASE_ALPHA_BETA"/>
    <property type="match status" value="1"/>
</dbReference>
<organism>
    <name type="scientific">Methanocella arvoryzae (strain DSM 22066 / NBRC 105507 / MRE50)</name>
    <dbReference type="NCBI Taxonomy" id="351160"/>
    <lineage>
        <taxon>Archaea</taxon>
        <taxon>Methanobacteriati</taxon>
        <taxon>Methanobacteriota</taxon>
        <taxon>Stenosarchaea group</taxon>
        <taxon>Methanomicrobia</taxon>
        <taxon>Methanocellales</taxon>
        <taxon>Methanocellaceae</taxon>
        <taxon>Methanocella</taxon>
    </lineage>
</organism>
<sequence length="579" mass="64060">MSQQGTIYRVAGPVVTAVGLNARMYDVVKVGNEGLMGEVIEIDNDKAIIQVYEDTSGVRPGEPVENTGMPLSVELGPGLLTSIYDGIQRPLEVLKEKMGNFITRGVSAPGLSRTKKWKFVPVVKAGDKVKGGIVIGTVQETKTIVHKIMVPPNVGETTIKDIKEGEFTVEDVIGHLENGTELKLMHKWPVRVPRPYVEKLRPDIPLITGQRVLDGLFPIAKGGTAAIPGPFGSGKTVTQQQLAKWSDAEIVVYIGCGERGNEMTEVLAEFPHLTDPKTGNPLMDRTVLIANTSNMPVAAREASCYTGITIAEYYRDMGYGVSLMADSTSRWAEAMREISSRLEEMPGEEGYPAYLAARLSEFYERAGRVITPIGKEGSVTVIGAVSPAGGDISEPVTQNTLRIVKVFWALDAKLAQRRHFPSINWLNSYSLYQDSLKDWYDKNISPEWNQLKAESMELLQRESELQEIVQLVGSDALPEDQQLTIEIARMIREIFLQQNAYHEVDTYCSLDKQLKMLKSIMQFGAYARTALASGVPMSKILNLNSKNDLAKVKFEANYDAYLTKVNDDMKKEFKSLEAA</sequence>
<name>AATA_METAR</name>
<feature type="chain" id="PRO_1000059362" description="A-type ATP synthase subunit A">
    <location>
        <begin position="1"/>
        <end position="579"/>
    </location>
</feature>
<feature type="binding site" evidence="1">
    <location>
        <begin position="229"/>
        <end position="236"/>
    </location>
    <ligand>
        <name>ATP</name>
        <dbReference type="ChEBI" id="CHEBI:30616"/>
    </ligand>
</feature>
<accession>Q0W363</accession>
<gene>
    <name evidence="1" type="primary">atpA</name>
    <name type="ordered locus">UNCMA_10660</name>
    <name type="ORF">RCIX2030</name>
</gene>
<evidence type="ECO:0000255" key="1">
    <source>
        <dbReference type="HAMAP-Rule" id="MF_00309"/>
    </source>
</evidence>
<reference key="1">
    <citation type="journal article" date="2006" name="Science">
        <title>Genome of rice cluster I archaea -- the key methane producers in the rice rhizosphere.</title>
        <authorList>
            <person name="Erkel C."/>
            <person name="Kube M."/>
            <person name="Reinhardt R."/>
            <person name="Liesack W."/>
        </authorList>
    </citation>
    <scope>NUCLEOTIDE SEQUENCE [LARGE SCALE GENOMIC DNA]</scope>
    <source>
        <strain>DSM 22066 / NBRC 105507 / MRE50</strain>
    </source>
</reference>
<proteinExistence type="inferred from homology"/>